<comment type="function">
    <text evidence="1">The coatomer is a cytosolic protein complex that binds to dilysine motifs and reversibly associates with Golgi non-clathrin-coated vesicles, which further mediate biosynthetic protein transport from the ER, via the Golgi up to the trans Golgi network. The coatomer complex is required for budding from Golgi membranes, and is essential for the retrograde Golgi-to-ER transport of dilysine-tagged proteins. In mammals, the coatomer can only be recruited by membranes associated with ADP-ribosylation factors (ARFs), which are small GTP-binding proteins; the complex also influences the Golgi structural integrity, as well as the processing, activity, and endocytic recycling of LDL receptors (By similarity).</text>
</comment>
<comment type="subunit">
    <text>Oligomeric complex that consists of at least the alpha, beta, beta', gamma, delta, epsilon and zeta subunits.</text>
</comment>
<comment type="subcellular location">
    <subcellularLocation>
        <location evidence="1">Cytoplasm</location>
    </subcellularLocation>
    <subcellularLocation>
        <location evidence="1">Golgi apparatus membrane</location>
        <topology evidence="1">Peripheral membrane protein</topology>
        <orientation evidence="1">Cytoplasmic side</orientation>
    </subcellularLocation>
    <subcellularLocation>
        <location evidence="1">Cytoplasmic vesicle</location>
        <location evidence="1">COPI-coated vesicle membrane</location>
        <topology evidence="1">Peripheral membrane protein</topology>
        <orientation evidence="1">Cytoplasmic side</orientation>
    </subcellularLocation>
    <text evidence="1">The coatomer is cytoplasmic or polymerized on the cytoplasmic side of the Golgi, as well as on the vesicles/buds originating from it.</text>
</comment>
<comment type="PTM">
    <text evidence="1">Phosphorylated by PKA.</text>
</comment>
<comment type="PTM">
    <text evidence="1">Polyubiquitinated by RCHY1 in the presence of androgen, leading to proteasomal degradation.</text>
</comment>
<comment type="similarity">
    <text evidence="3">Belongs to the COPE family.</text>
</comment>
<feature type="chain" id="PRO_0000193852" description="Coatomer subunit epsilon">
    <location>
        <begin position="1"/>
        <end position="308"/>
    </location>
</feature>
<feature type="modified residue" description="Phosphoserine" evidence="2">
    <location>
        <position position="13"/>
    </location>
</feature>
<feature type="modified residue" description="Phosphoserine" evidence="2">
    <location>
        <position position="45"/>
    </location>
</feature>
<feature type="modified residue" description="Phosphoserine" evidence="2">
    <location>
        <position position="99"/>
    </location>
</feature>
<feature type="sequence conflict" description="In Ref. 3; AAC36533." evidence="3" ref="3">
    <original>Q</original>
    <variation>R</variation>
    <location>
        <position position="291"/>
    </location>
</feature>
<proteinExistence type="evidence at protein level"/>
<reference key="1">
    <citation type="submission" date="2000-03" db="EMBL/GenBank/DDBJ databases">
        <title>Mouse Cope1 gene for nonclathrin coat protein epsilon-COP.</title>
        <authorList>
            <person name="Hahn Y."/>
            <person name="Chung J.H."/>
        </authorList>
    </citation>
    <scope>NUCLEOTIDE SEQUENCE [MRNA]</scope>
</reference>
<reference key="2">
    <citation type="journal article" date="2004" name="Genome Res.">
        <title>The status, quality, and expansion of the NIH full-length cDNA project: the Mammalian Gene Collection (MGC).</title>
        <authorList>
            <consortium name="The MGC Project Team"/>
        </authorList>
    </citation>
    <scope>NUCLEOTIDE SEQUENCE [LARGE SCALE MRNA]</scope>
    <source>
        <strain>C57BL/6J</strain>
        <tissue>Brain</tissue>
        <tissue>Mammary tumor</tissue>
    </source>
</reference>
<reference key="3">
    <citation type="journal article" date="1998" name="Mol. Immunol.">
        <title>Expressed genes in interleukin-4 treated B cells identified by cDNA representational difference analysis.</title>
        <authorList>
            <person name="Chu C.C."/>
            <person name="Paul W.E."/>
        </authorList>
    </citation>
    <scope>NUCLEOTIDE SEQUENCE [MRNA] OF 155-298</scope>
    <source>
        <strain>BALB/cJ</strain>
        <tissue>Spleen</tissue>
    </source>
</reference>
<reference key="4">
    <citation type="journal article" date="2010" name="Cell">
        <title>A tissue-specific atlas of mouse protein phosphorylation and expression.</title>
        <authorList>
            <person name="Huttlin E.L."/>
            <person name="Jedrychowski M.P."/>
            <person name="Elias J.E."/>
            <person name="Goswami T."/>
            <person name="Rad R."/>
            <person name="Beausoleil S.A."/>
            <person name="Villen J."/>
            <person name="Haas W."/>
            <person name="Sowa M.E."/>
            <person name="Gygi S.P."/>
        </authorList>
    </citation>
    <scope>IDENTIFICATION BY MASS SPECTROMETRY [LARGE SCALE ANALYSIS]</scope>
    <source>
        <tissue>Brain</tissue>
        <tissue>Brown adipose tissue</tissue>
        <tissue>Heart</tissue>
        <tissue>Kidney</tissue>
        <tissue>Liver</tissue>
        <tissue>Lung</tissue>
        <tissue>Pancreas</tissue>
        <tissue>Spleen</tissue>
        <tissue>Testis</tissue>
    </source>
</reference>
<dbReference type="EMBL" id="AB039837">
    <property type="protein sequence ID" value="BAA92384.1"/>
    <property type="molecule type" value="mRNA"/>
</dbReference>
<dbReference type="EMBL" id="BC009170">
    <property type="protein sequence ID" value="AAH09170.1"/>
    <property type="molecule type" value="mRNA"/>
</dbReference>
<dbReference type="EMBL" id="BC083336">
    <property type="protein sequence ID" value="AAH83336.1"/>
    <property type="molecule type" value="mRNA"/>
</dbReference>
<dbReference type="EMBL" id="U89427">
    <property type="protein sequence ID" value="AAC36533.1"/>
    <property type="molecule type" value="mRNA"/>
</dbReference>
<dbReference type="CCDS" id="CCDS22365.1"/>
<dbReference type="RefSeq" id="NP_067513.1">
    <property type="nucleotide sequence ID" value="NM_021538.2"/>
</dbReference>
<dbReference type="PDB" id="5A1V">
    <property type="method" value="EM"/>
    <property type="resolution" value="21.00 A"/>
    <property type="chains" value="Q/Z=1-308"/>
</dbReference>
<dbReference type="PDB" id="5A1Y">
    <property type="method" value="EM"/>
    <property type="resolution" value="21.00 A"/>
    <property type="chains" value="X/Z=1-308"/>
</dbReference>
<dbReference type="PDB" id="5NZT">
    <property type="method" value="EM"/>
    <property type="resolution" value="17.00 A"/>
    <property type="chains" value="E=1-308"/>
</dbReference>
<dbReference type="PDB" id="5NZV">
    <property type="method" value="EM"/>
    <property type="resolution" value="17.30 A"/>
    <property type="chains" value="E/O=1-308"/>
</dbReference>
<dbReference type="PDBsum" id="5A1V"/>
<dbReference type="PDBsum" id="5A1Y"/>
<dbReference type="PDBsum" id="5NZT"/>
<dbReference type="PDBsum" id="5NZV"/>
<dbReference type="EMDB" id="EMD-3722"/>
<dbReference type="EMDB" id="EMD-3724"/>
<dbReference type="SMR" id="O89079"/>
<dbReference type="BioGRID" id="208506">
    <property type="interactions" value="16"/>
</dbReference>
<dbReference type="CORUM" id="O89079"/>
<dbReference type="FunCoup" id="O89079">
    <property type="interactions" value="3207"/>
</dbReference>
<dbReference type="IntAct" id="O89079">
    <property type="interactions" value="1"/>
</dbReference>
<dbReference type="STRING" id="10090.ENSMUSP00000071078"/>
<dbReference type="GlyGen" id="O89079">
    <property type="glycosylation" value="1 site, 1 O-linked glycan (1 site)"/>
</dbReference>
<dbReference type="iPTMnet" id="O89079"/>
<dbReference type="PhosphoSitePlus" id="O89079"/>
<dbReference type="SwissPalm" id="O89079"/>
<dbReference type="REPRODUCTION-2DPAGE" id="O89079"/>
<dbReference type="jPOST" id="O89079"/>
<dbReference type="PaxDb" id="10090-ENSMUSP00000071078"/>
<dbReference type="PeptideAtlas" id="O89079"/>
<dbReference type="ProteomicsDB" id="283607"/>
<dbReference type="Pumba" id="O89079"/>
<dbReference type="Antibodypedia" id="28232">
    <property type="antibodies" value="172 antibodies from 28 providers"/>
</dbReference>
<dbReference type="DNASU" id="59042"/>
<dbReference type="Ensembl" id="ENSMUST00000066469.14">
    <property type="protein sequence ID" value="ENSMUSP00000071078.8"/>
    <property type="gene ID" value="ENSMUSG00000055681.15"/>
</dbReference>
<dbReference type="GeneID" id="59042"/>
<dbReference type="KEGG" id="mmu:59042"/>
<dbReference type="UCSC" id="uc009lzx.1">
    <property type="organism name" value="mouse"/>
</dbReference>
<dbReference type="AGR" id="MGI:1891702"/>
<dbReference type="CTD" id="11316"/>
<dbReference type="MGI" id="MGI:1891702">
    <property type="gene designation" value="Cope"/>
</dbReference>
<dbReference type="VEuPathDB" id="HostDB:ENSMUSG00000055681"/>
<dbReference type="eggNOG" id="KOG3081">
    <property type="taxonomic scope" value="Eukaryota"/>
</dbReference>
<dbReference type="GeneTree" id="ENSGT00390000003478"/>
<dbReference type="HOGENOM" id="CLU_049363_0_0_1"/>
<dbReference type="InParanoid" id="O89079"/>
<dbReference type="OMA" id="MIVLSQH"/>
<dbReference type="OrthoDB" id="310217at2759"/>
<dbReference type="PhylomeDB" id="O89079"/>
<dbReference type="TreeFam" id="TF313390"/>
<dbReference type="Reactome" id="R-MMU-6807878">
    <property type="pathway name" value="COPI-mediated anterograde transport"/>
</dbReference>
<dbReference type="Reactome" id="R-MMU-6811434">
    <property type="pathway name" value="COPI-dependent Golgi-to-ER retrograde traffic"/>
</dbReference>
<dbReference type="BioGRID-ORCS" id="59042">
    <property type="hits" value="17 hits in 79 CRISPR screens"/>
</dbReference>
<dbReference type="ChiTaRS" id="Cope">
    <property type="organism name" value="mouse"/>
</dbReference>
<dbReference type="EvolutionaryTrace" id="O89079"/>
<dbReference type="PRO" id="PR:O89079"/>
<dbReference type="Proteomes" id="UP000000589">
    <property type="component" value="Chromosome 8"/>
</dbReference>
<dbReference type="RNAct" id="O89079">
    <property type="molecule type" value="protein"/>
</dbReference>
<dbReference type="Bgee" id="ENSMUSG00000055681">
    <property type="expression patterns" value="Expressed in seminal vesicle and 269 other cell types or tissues"/>
</dbReference>
<dbReference type="ExpressionAtlas" id="O89079">
    <property type="expression patterns" value="baseline and differential"/>
</dbReference>
<dbReference type="GO" id="GO:0030137">
    <property type="term" value="C:COPI-coated vesicle"/>
    <property type="evidence" value="ECO:0000314"/>
    <property type="project" value="MGI"/>
</dbReference>
<dbReference type="GO" id="GO:0030663">
    <property type="term" value="C:COPI-coated vesicle membrane"/>
    <property type="evidence" value="ECO:0007669"/>
    <property type="project" value="UniProtKB-SubCell"/>
</dbReference>
<dbReference type="GO" id="GO:0000139">
    <property type="term" value="C:Golgi membrane"/>
    <property type="evidence" value="ECO:0007669"/>
    <property type="project" value="UniProtKB-SubCell"/>
</dbReference>
<dbReference type="GO" id="GO:0005654">
    <property type="term" value="C:nucleoplasm"/>
    <property type="evidence" value="ECO:0007669"/>
    <property type="project" value="Ensembl"/>
</dbReference>
<dbReference type="GO" id="GO:0005198">
    <property type="term" value="F:structural molecule activity"/>
    <property type="evidence" value="ECO:0007669"/>
    <property type="project" value="InterPro"/>
</dbReference>
<dbReference type="GO" id="GO:0099612">
    <property type="term" value="P:protein localization to axon"/>
    <property type="evidence" value="ECO:0000315"/>
    <property type="project" value="MGI"/>
</dbReference>
<dbReference type="GO" id="GO:0015031">
    <property type="term" value="P:protein transport"/>
    <property type="evidence" value="ECO:0007669"/>
    <property type="project" value="UniProtKB-KW"/>
</dbReference>
<dbReference type="GO" id="GO:0006890">
    <property type="term" value="P:retrograde vesicle-mediated transport, Golgi to endoplasmic reticulum"/>
    <property type="evidence" value="ECO:0007669"/>
    <property type="project" value="InterPro"/>
</dbReference>
<dbReference type="FunFam" id="1.25.40.10:FF:000148">
    <property type="entry name" value="Coatomer subunit epsilon"/>
    <property type="match status" value="1"/>
</dbReference>
<dbReference type="Gene3D" id="1.25.40.10">
    <property type="entry name" value="Tetratricopeptide repeat domain"/>
    <property type="match status" value="1"/>
</dbReference>
<dbReference type="InterPro" id="IPR006822">
    <property type="entry name" value="Coatomer_esu"/>
</dbReference>
<dbReference type="InterPro" id="IPR011990">
    <property type="entry name" value="TPR-like_helical_dom_sf"/>
</dbReference>
<dbReference type="PANTHER" id="PTHR10805">
    <property type="entry name" value="COATOMER SUBUNIT EPSILON"/>
    <property type="match status" value="1"/>
</dbReference>
<dbReference type="PANTHER" id="PTHR10805:SF0">
    <property type="entry name" value="COATOMER SUBUNIT EPSILON"/>
    <property type="match status" value="1"/>
</dbReference>
<dbReference type="Pfam" id="PF04733">
    <property type="entry name" value="Coatomer_E"/>
    <property type="match status" value="1"/>
</dbReference>
<dbReference type="PIRSF" id="PIRSF016478">
    <property type="entry name" value="Coatomer_esu"/>
    <property type="match status" value="1"/>
</dbReference>
<dbReference type="SUPFAM" id="SSF48452">
    <property type="entry name" value="TPR-like"/>
    <property type="match status" value="1"/>
</dbReference>
<sequence length="308" mass="34567">MAPPVPGAVSGGSGEVDELFDVKNAFYIGSYQQCINEAQRVKLSSPEREVERDVFLYRAYLAQRKYGVVLDEIKPSSAPELQAVRMFAEYLASENQRDSIVLELDREMSRSVDVTNTTFLLMAASIYFHDQNPDAALRTLHQGDGLECMAMTIQILLKLDRLDLARKELKKMQDQDEDATLTQLATAWVNLAVGGEKLQEAYYIFQELADKCSPTLLLLNGQAACHSAQGRWETAEGVLQEALDKDSGHPETLINLIVLSQHLGKPPEVTNRYLSQLKDAHRAHPFIKEYQAKENDFDRLAMQYAPSA</sequence>
<protein>
    <recommendedName>
        <fullName>Coatomer subunit epsilon</fullName>
    </recommendedName>
    <alternativeName>
        <fullName>Epsilon-coat protein</fullName>
        <shortName>Epsilon-COP</shortName>
    </alternativeName>
</protein>
<accession>O89079</accession>
<accession>Q9JM65</accession>
<organism>
    <name type="scientific">Mus musculus</name>
    <name type="common">Mouse</name>
    <dbReference type="NCBI Taxonomy" id="10090"/>
    <lineage>
        <taxon>Eukaryota</taxon>
        <taxon>Metazoa</taxon>
        <taxon>Chordata</taxon>
        <taxon>Craniata</taxon>
        <taxon>Vertebrata</taxon>
        <taxon>Euteleostomi</taxon>
        <taxon>Mammalia</taxon>
        <taxon>Eutheria</taxon>
        <taxon>Euarchontoglires</taxon>
        <taxon>Glires</taxon>
        <taxon>Rodentia</taxon>
        <taxon>Myomorpha</taxon>
        <taxon>Muroidea</taxon>
        <taxon>Muridae</taxon>
        <taxon>Murinae</taxon>
        <taxon>Mus</taxon>
        <taxon>Mus</taxon>
    </lineage>
</organism>
<gene>
    <name type="primary">Cope</name>
    <name type="synonym">Cope1</name>
</gene>
<name>COPE_MOUSE</name>
<evidence type="ECO:0000250" key="1"/>
<evidence type="ECO:0000250" key="2">
    <source>
        <dbReference type="UniProtKB" id="O14579"/>
    </source>
</evidence>
<evidence type="ECO:0000305" key="3"/>
<keyword id="KW-0002">3D-structure</keyword>
<keyword id="KW-0963">Cytoplasm</keyword>
<keyword id="KW-0968">Cytoplasmic vesicle</keyword>
<keyword id="KW-0931">ER-Golgi transport</keyword>
<keyword id="KW-0333">Golgi apparatus</keyword>
<keyword id="KW-0472">Membrane</keyword>
<keyword id="KW-0597">Phosphoprotein</keyword>
<keyword id="KW-0653">Protein transport</keyword>
<keyword id="KW-1185">Reference proteome</keyword>
<keyword id="KW-0813">Transport</keyword>
<keyword id="KW-0832">Ubl conjugation</keyword>